<accession>P14478</accession>
<feature type="peptide" id="PRO_0000009084" description="Fibrinopeptide B">
    <location>
        <begin position="1"/>
        <end position="13"/>
    </location>
</feature>
<feature type="chain" id="PRO_0000376836" description="Fibrinogen beta chain">
    <location>
        <begin position="14"/>
        <end position="41" status="greater than"/>
    </location>
</feature>
<feature type="region of interest" description="Disordered" evidence="4">
    <location>
        <begin position="1"/>
        <end position="41"/>
    </location>
</feature>
<feature type="region of interest" description="Beta-chain polymerization, binding distal domain of another fibrin" evidence="1">
    <location>
        <begin position="14"/>
        <end position="16"/>
    </location>
</feature>
<feature type="compositionally biased region" description="Basic and acidic residues" evidence="4">
    <location>
        <begin position="10"/>
        <end position="26"/>
    </location>
</feature>
<feature type="site" description="Cleavage; by thrombin; to release fibrinopeptide B" evidence="1">
    <location>
        <begin position="13"/>
        <end position="14"/>
    </location>
</feature>
<feature type="modified residue" description="Sulfotyrosine" evidence="6">
    <location>
        <position position="4"/>
    </location>
</feature>
<feature type="non-terminal residue">
    <location>
        <position position="41"/>
    </location>
</feature>
<evidence type="ECO:0000250" key="1"/>
<evidence type="ECO:0000250" key="2">
    <source>
        <dbReference type="UniProtKB" id="E9PV24"/>
    </source>
</evidence>
<evidence type="ECO:0000250" key="3">
    <source>
        <dbReference type="UniProtKB" id="P02675"/>
    </source>
</evidence>
<evidence type="ECO:0000256" key="4">
    <source>
        <dbReference type="SAM" id="MobiDB-lite"/>
    </source>
</evidence>
<evidence type="ECO:0000269" key="5">
    <source>
    </source>
</evidence>
<evidence type="ECO:0000269" key="6">
    <source ref="2"/>
</evidence>
<sequence length="41" mass="4585">ADDYDDEVLPDARGHRPIDRKREELPSLRPAPPPISGGGYR</sequence>
<reference key="1">
    <citation type="journal article" date="1997" name="Toxicon">
        <title>Capillary permeability-increasing enzyme-2 from the venom of Agkistrodon caliginosus (Kankoku-mamushi): activity resulting from the release of peptides from fibrinogen.</title>
        <authorList>
            <person name="Shimokawa K."/>
            <person name="Takahashi H."/>
        </authorList>
    </citation>
    <scope>PROTEIN SEQUENCE</scope>
    <scope>SUBCELLULAR LOCATION</scope>
    <source>
        <tissue>Plasma</tissue>
    </source>
</reference>
<reference key="2">
    <citation type="journal article" date="1965" name="Acta Chem. Scand.">
        <title>Studies on fibrinopeptides from mammals.</title>
        <authorList>
            <person name="Blombaeck B."/>
            <person name="Blombaeck M."/>
            <person name="Grondahl N.J."/>
        </authorList>
    </citation>
    <scope>PROTEIN SEQUENCE OF 1-13</scope>
    <scope>SULFATION AT TYR-4</scope>
</reference>
<name>FIBB_RABIT</name>
<comment type="function">
    <text evidence="2">Cleaved by the protease thrombin to yield monomers which, together with fibrinogen alpha (FGA) and fibrinogen gamma (FGG), polymerize to form an insoluble fibrin matrix. Fibrin has a major function in hemostasis as one of the primary components of blood clots. In addition, functions during the early stages of wound repair to stabilize the lesion and guide cell migration during re-epithelialization. Was originally thought to be essential for platelet aggregation, based on in vitro studies using anticoagulated blood. However subsequent studies have shown that it is not absolutely required for thrombus formation in vivo. Enhances expression of SELP in activated platelets. Maternal fibrinogen is essential for successful pregnancy. Fibrin deposition is also associated with infection, where it protects against IFNG-mediated hemorrhage. May also facilitate the antibacterial immune response via both innate and T-cell mediated pathways.</text>
</comment>
<comment type="subunit">
    <text evidence="3">Heterohexamer; disulfide linked. Contains 2 sets of 3 non-identical chains (alpha, beta and gamma). The 2 heterotrimers are in head to head conformation with the N-termini in a small central domain (By similarity).</text>
</comment>
<comment type="subcellular location">
    <subcellularLocation>
        <location evidence="5">Secreted</location>
    </subcellularLocation>
</comment>
<comment type="domain">
    <text evidence="3">A long coiled coil structure formed by 3 polypeptide chains connects the central nodule to the C-terminal domains (distal nodules). The long C-terminal ends of the alpha chains fold back, contributing a fourth strand to the coiled coil structure.</text>
</comment>
<comment type="PTM">
    <text>Conversion of fibrinogen to fibrin is triggered by thrombin, which cleaves fibrinopeptides A and B from alpha and beta chains, and thus exposes the N-terminal polymerization sites responsible for the formation of the soft clot.</text>
</comment>
<protein>
    <recommendedName>
        <fullName>Fibrinogen beta chain</fullName>
    </recommendedName>
    <component>
        <recommendedName>
            <fullName>Fibrinopeptide B</fullName>
        </recommendedName>
    </component>
    <component>
        <recommendedName>
            <fullName>Fibrinogen beta chain</fullName>
        </recommendedName>
    </component>
</protein>
<proteinExistence type="evidence at protein level"/>
<dbReference type="STRING" id="9986.ENSOCUP00000009668"/>
<dbReference type="PaxDb" id="9986-ENSOCUP00000009668"/>
<dbReference type="eggNOG" id="KOG2579">
    <property type="taxonomic scope" value="Eukaryota"/>
</dbReference>
<dbReference type="InParanoid" id="P14478"/>
<dbReference type="Proteomes" id="UP000001811">
    <property type="component" value="Unplaced"/>
</dbReference>
<dbReference type="GO" id="GO:0009986">
    <property type="term" value="C:cell surface"/>
    <property type="evidence" value="ECO:0000250"/>
    <property type="project" value="UniProtKB"/>
</dbReference>
<dbReference type="GO" id="GO:0009897">
    <property type="term" value="C:external side of plasma membrane"/>
    <property type="evidence" value="ECO:0000250"/>
    <property type="project" value="UniProtKB"/>
</dbReference>
<dbReference type="GO" id="GO:0005576">
    <property type="term" value="C:extracellular region"/>
    <property type="evidence" value="ECO:0007669"/>
    <property type="project" value="UniProtKB-SubCell"/>
</dbReference>
<dbReference type="GO" id="GO:0031091">
    <property type="term" value="C:platelet alpha granule"/>
    <property type="evidence" value="ECO:0000250"/>
    <property type="project" value="UniProtKB"/>
</dbReference>
<dbReference type="GO" id="GO:0051087">
    <property type="term" value="F:protein-folding chaperone binding"/>
    <property type="evidence" value="ECO:0000250"/>
    <property type="project" value="UniProtKB"/>
</dbReference>
<dbReference type="GO" id="GO:0002250">
    <property type="term" value="P:adaptive immune response"/>
    <property type="evidence" value="ECO:0007669"/>
    <property type="project" value="UniProtKB-KW"/>
</dbReference>
<dbReference type="GO" id="GO:0007596">
    <property type="term" value="P:blood coagulation"/>
    <property type="evidence" value="ECO:0007669"/>
    <property type="project" value="UniProtKB-KW"/>
</dbReference>
<dbReference type="GO" id="GO:0045087">
    <property type="term" value="P:innate immune response"/>
    <property type="evidence" value="ECO:0007669"/>
    <property type="project" value="UniProtKB-KW"/>
</dbReference>
<dbReference type="GO" id="GO:0051592">
    <property type="term" value="P:response to calcium ion"/>
    <property type="evidence" value="ECO:0000250"/>
    <property type="project" value="UniProtKB"/>
</dbReference>
<keyword id="KW-1064">Adaptive immunity</keyword>
<keyword id="KW-0094">Blood coagulation</keyword>
<keyword id="KW-0175">Coiled coil</keyword>
<keyword id="KW-0903">Direct protein sequencing</keyword>
<keyword id="KW-1015">Disulfide bond</keyword>
<keyword id="KW-0356">Hemostasis</keyword>
<keyword id="KW-0391">Immunity</keyword>
<keyword id="KW-0399">Innate immunity</keyword>
<keyword id="KW-1185">Reference proteome</keyword>
<keyword id="KW-0964">Secreted</keyword>
<keyword id="KW-0765">Sulfation</keyword>
<gene>
    <name type="primary">FGB</name>
</gene>
<organism>
    <name type="scientific">Oryctolagus cuniculus</name>
    <name type="common">Rabbit</name>
    <dbReference type="NCBI Taxonomy" id="9986"/>
    <lineage>
        <taxon>Eukaryota</taxon>
        <taxon>Metazoa</taxon>
        <taxon>Chordata</taxon>
        <taxon>Craniata</taxon>
        <taxon>Vertebrata</taxon>
        <taxon>Euteleostomi</taxon>
        <taxon>Mammalia</taxon>
        <taxon>Eutheria</taxon>
        <taxon>Euarchontoglires</taxon>
        <taxon>Glires</taxon>
        <taxon>Lagomorpha</taxon>
        <taxon>Leporidae</taxon>
        <taxon>Oryctolagus</taxon>
    </lineage>
</organism>